<gene>
    <name type="primary">MT-CYB</name>
    <name type="synonym">COB</name>
    <name type="synonym">CYTB</name>
    <name type="synonym">MTCYB</name>
</gene>
<evidence type="ECO:0000250" key="1"/>
<evidence type="ECO:0000250" key="2">
    <source>
        <dbReference type="UniProtKB" id="P00157"/>
    </source>
</evidence>
<evidence type="ECO:0000255" key="3">
    <source>
        <dbReference type="PROSITE-ProRule" id="PRU00967"/>
    </source>
</evidence>
<evidence type="ECO:0000255" key="4">
    <source>
        <dbReference type="PROSITE-ProRule" id="PRU00968"/>
    </source>
</evidence>
<protein>
    <recommendedName>
        <fullName>Cytochrome b</fullName>
    </recommendedName>
    <alternativeName>
        <fullName>Complex III subunit 3</fullName>
    </alternativeName>
    <alternativeName>
        <fullName>Complex III subunit III</fullName>
    </alternativeName>
    <alternativeName>
        <fullName>Cytochrome b-c1 complex subunit 3</fullName>
    </alternativeName>
    <alternativeName>
        <fullName>Ubiquinol-cytochrome-c reductase complex cytochrome b subunit</fullName>
    </alternativeName>
</protein>
<geneLocation type="mitochondrion"/>
<keyword id="KW-0249">Electron transport</keyword>
<keyword id="KW-0349">Heme</keyword>
<keyword id="KW-0408">Iron</keyword>
<keyword id="KW-0472">Membrane</keyword>
<keyword id="KW-0479">Metal-binding</keyword>
<keyword id="KW-0496">Mitochondrion</keyword>
<keyword id="KW-0999">Mitochondrion inner membrane</keyword>
<keyword id="KW-0679">Respiratory chain</keyword>
<keyword id="KW-0812">Transmembrane</keyword>
<keyword id="KW-1133">Transmembrane helix</keyword>
<keyword id="KW-0813">Transport</keyword>
<keyword id="KW-0830">Ubiquinone</keyword>
<comment type="function">
    <text evidence="2">Component of the ubiquinol-cytochrome c reductase complex (complex III or cytochrome b-c1 complex) that is part of the mitochondrial respiratory chain. The b-c1 complex mediates electron transfer from ubiquinol to cytochrome c. Contributes to the generation of a proton gradient across the mitochondrial membrane that is then used for ATP synthesis.</text>
</comment>
<comment type="cofactor">
    <cofactor evidence="2">
        <name>heme b</name>
        <dbReference type="ChEBI" id="CHEBI:60344"/>
    </cofactor>
    <text evidence="2">Binds 2 heme b groups non-covalently.</text>
</comment>
<comment type="subunit">
    <text evidence="2">The cytochrome bc1 complex contains 3 respiratory subunits (MT-CYB, CYC1 and UQCRFS1), 2 core proteins (UQCRC1 and UQCRC2) and probably 6 low-molecular weight proteins.</text>
</comment>
<comment type="subcellular location">
    <subcellularLocation>
        <location evidence="2">Mitochondrion inner membrane</location>
        <topology evidence="2">Multi-pass membrane protein</topology>
    </subcellularLocation>
</comment>
<comment type="miscellaneous">
    <text evidence="1">Heme 1 (or BL or b562) is low-potential and absorbs at about 562 nm, and heme 2 (or BH or b566) is high-potential and absorbs at about 566 nm.</text>
</comment>
<comment type="similarity">
    <text evidence="3 4">Belongs to the cytochrome b family.</text>
</comment>
<comment type="caution">
    <text evidence="2">The full-length protein contains only eight transmembrane helices, not nine as predicted by bioinformatics tools.</text>
</comment>
<organism>
    <name type="scientific">Naja multifasciata</name>
    <name type="common">Burrowing cobra</name>
    <name type="synonym">Paranaja multifasciata</name>
    <dbReference type="NCBI Taxonomy" id="111947"/>
    <lineage>
        <taxon>Eukaryota</taxon>
        <taxon>Metazoa</taxon>
        <taxon>Chordata</taxon>
        <taxon>Craniata</taxon>
        <taxon>Vertebrata</taxon>
        <taxon>Euteleostomi</taxon>
        <taxon>Lepidosauria</taxon>
        <taxon>Squamata</taxon>
        <taxon>Bifurcata</taxon>
        <taxon>Unidentata</taxon>
        <taxon>Episquamata</taxon>
        <taxon>Toxicofera</taxon>
        <taxon>Serpentes</taxon>
        <taxon>Colubroidea</taxon>
        <taxon>Elapidae</taxon>
        <taxon>Elapinae</taxon>
        <taxon>Naja</taxon>
    </lineage>
</organism>
<feature type="chain" id="PRO_0000061353" description="Cytochrome b">
    <location>
        <begin position="1"/>
        <end position="372"/>
    </location>
</feature>
<feature type="transmembrane region" description="Helical" evidence="2">
    <location>
        <begin position="25"/>
        <end position="45"/>
    </location>
</feature>
<feature type="transmembrane region" description="Helical" evidence="2">
    <location>
        <begin position="69"/>
        <end position="90"/>
    </location>
</feature>
<feature type="transmembrane region" description="Helical" evidence="2">
    <location>
        <begin position="105"/>
        <end position="125"/>
    </location>
</feature>
<feature type="transmembrane region" description="Helical" evidence="2">
    <location>
        <begin position="170"/>
        <end position="190"/>
    </location>
</feature>
<feature type="transmembrane region" description="Helical" evidence="2">
    <location>
        <begin position="218"/>
        <end position="238"/>
    </location>
</feature>
<feature type="transmembrane region" description="Helical" evidence="2">
    <location>
        <begin position="280"/>
        <end position="300"/>
    </location>
</feature>
<feature type="transmembrane region" description="Helical" evidence="2">
    <location>
        <begin position="312"/>
        <end position="332"/>
    </location>
</feature>
<feature type="transmembrane region" description="Helical" evidence="2">
    <location>
        <begin position="339"/>
        <end position="358"/>
    </location>
</feature>
<feature type="binding site" description="axial binding residue" evidence="2">
    <location>
        <position position="75"/>
    </location>
    <ligand>
        <name>heme b</name>
        <dbReference type="ChEBI" id="CHEBI:60344"/>
        <label>b562</label>
    </ligand>
    <ligandPart>
        <name>Fe</name>
        <dbReference type="ChEBI" id="CHEBI:18248"/>
    </ligandPart>
</feature>
<feature type="binding site" description="axial binding residue" evidence="2">
    <location>
        <position position="89"/>
    </location>
    <ligand>
        <name>heme b</name>
        <dbReference type="ChEBI" id="CHEBI:60344"/>
        <label>b566</label>
    </ligand>
    <ligandPart>
        <name>Fe</name>
        <dbReference type="ChEBI" id="CHEBI:18248"/>
    </ligandPart>
</feature>
<feature type="binding site" description="axial binding residue" evidence="2">
    <location>
        <position position="174"/>
    </location>
    <ligand>
        <name>heme b</name>
        <dbReference type="ChEBI" id="CHEBI:60344"/>
        <label>b562</label>
    </ligand>
    <ligandPart>
        <name>Fe</name>
        <dbReference type="ChEBI" id="CHEBI:18248"/>
    </ligandPart>
</feature>
<feature type="binding site" description="axial binding residue" evidence="2">
    <location>
        <position position="188"/>
    </location>
    <ligand>
        <name>heme b</name>
        <dbReference type="ChEBI" id="CHEBI:60344"/>
        <label>b566</label>
    </ligand>
    <ligandPart>
        <name>Fe</name>
        <dbReference type="ChEBI" id="CHEBI:18248"/>
    </ligandPart>
</feature>
<feature type="binding site" evidence="2">
    <location>
        <position position="193"/>
    </location>
    <ligand>
        <name>a ubiquinone</name>
        <dbReference type="ChEBI" id="CHEBI:16389"/>
    </ligand>
</feature>
<dbReference type="EMBL" id="AF217837">
    <property type="protein sequence ID" value="AAF37256.1"/>
    <property type="molecule type" value="Genomic_DNA"/>
</dbReference>
<dbReference type="SMR" id="Q9MLJ1"/>
<dbReference type="GO" id="GO:0005743">
    <property type="term" value="C:mitochondrial inner membrane"/>
    <property type="evidence" value="ECO:0007669"/>
    <property type="project" value="UniProtKB-SubCell"/>
</dbReference>
<dbReference type="GO" id="GO:0045275">
    <property type="term" value="C:respiratory chain complex III"/>
    <property type="evidence" value="ECO:0007669"/>
    <property type="project" value="InterPro"/>
</dbReference>
<dbReference type="GO" id="GO:0046872">
    <property type="term" value="F:metal ion binding"/>
    <property type="evidence" value="ECO:0007669"/>
    <property type="project" value="UniProtKB-KW"/>
</dbReference>
<dbReference type="GO" id="GO:0008121">
    <property type="term" value="F:ubiquinol-cytochrome-c reductase activity"/>
    <property type="evidence" value="ECO:0007669"/>
    <property type="project" value="InterPro"/>
</dbReference>
<dbReference type="GO" id="GO:0006122">
    <property type="term" value="P:mitochondrial electron transport, ubiquinol to cytochrome c"/>
    <property type="evidence" value="ECO:0007669"/>
    <property type="project" value="TreeGrafter"/>
</dbReference>
<dbReference type="CDD" id="cd00290">
    <property type="entry name" value="cytochrome_b_C"/>
    <property type="match status" value="1"/>
</dbReference>
<dbReference type="CDD" id="cd00284">
    <property type="entry name" value="Cytochrome_b_N"/>
    <property type="match status" value="1"/>
</dbReference>
<dbReference type="Gene3D" id="1.20.810.10">
    <property type="entry name" value="Cytochrome Bc1 Complex, Chain C"/>
    <property type="match status" value="1"/>
</dbReference>
<dbReference type="InterPro" id="IPR005798">
    <property type="entry name" value="Cyt_b/b6_C"/>
</dbReference>
<dbReference type="InterPro" id="IPR036150">
    <property type="entry name" value="Cyt_b/b6_C_sf"/>
</dbReference>
<dbReference type="InterPro" id="IPR005797">
    <property type="entry name" value="Cyt_b/b6_N"/>
</dbReference>
<dbReference type="InterPro" id="IPR027387">
    <property type="entry name" value="Cytb/b6-like_sf"/>
</dbReference>
<dbReference type="InterPro" id="IPR030689">
    <property type="entry name" value="Cytochrome_b"/>
</dbReference>
<dbReference type="InterPro" id="IPR048260">
    <property type="entry name" value="Cytochrome_b_C_euk/bac"/>
</dbReference>
<dbReference type="InterPro" id="IPR048259">
    <property type="entry name" value="Cytochrome_b_N_euk/bac"/>
</dbReference>
<dbReference type="InterPro" id="IPR016174">
    <property type="entry name" value="Di-haem_cyt_TM"/>
</dbReference>
<dbReference type="PANTHER" id="PTHR19271">
    <property type="entry name" value="CYTOCHROME B"/>
    <property type="match status" value="1"/>
</dbReference>
<dbReference type="PANTHER" id="PTHR19271:SF16">
    <property type="entry name" value="CYTOCHROME B"/>
    <property type="match status" value="1"/>
</dbReference>
<dbReference type="Pfam" id="PF00032">
    <property type="entry name" value="Cytochrom_B_C"/>
    <property type="match status" value="1"/>
</dbReference>
<dbReference type="Pfam" id="PF00033">
    <property type="entry name" value="Cytochrome_B"/>
    <property type="match status" value="1"/>
</dbReference>
<dbReference type="PIRSF" id="PIRSF038885">
    <property type="entry name" value="COB"/>
    <property type="match status" value="1"/>
</dbReference>
<dbReference type="SUPFAM" id="SSF81648">
    <property type="entry name" value="a domain/subunit of cytochrome bc1 complex (Ubiquinol-cytochrome c reductase)"/>
    <property type="match status" value="1"/>
</dbReference>
<dbReference type="SUPFAM" id="SSF81342">
    <property type="entry name" value="Transmembrane di-heme cytochromes"/>
    <property type="match status" value="1"/>
</dbReference>
<dbReference type="PROSITE" id="PS51003">
    <property type="entry name" value="CYTB_CTER"/>
    <property type="match status" value="1"/>
</dbReference>
<dbReference type="PROSITE" id="PS51002">
    <property type="entry name" value="CYTB_NTER"/>
    <property type="match status" value="1"/>
</dbReference>
<name>CYB_NAJMU</name>
<accession>Q9MLJ1</accession>
<sequence length="372" mass="42030">MSNQHTLLVSNLLPVGSNISTWWNFGSMLLTCLALQTMTGFFLAIHYTANINLAFSSVIHITRDVPYGWIMQNIHAISASLFFICIYIHIARGLYYGLYLNKEVWLSGTTLLITLMATAFFGYVLPWGQMSFWAATVITNLLTAIPYLGATLTTWLWGGFSINDPTLTRFFALHFILPFAIISLSSIHIILLHNEGSNNPLGTNSDIDKIPFHPYHSYKDMLMITSMITLLFIILSFSPNLLNDPENFSKANPLVTPQHIKPEWYFLFAYGILRSIPNKLGGTLALLTSVAILTTVPFTHTSYTRSMMFRPLSQALFWTLIATFITITWTASKPVEPPFVTISQTTSIIYFSFFITIPLLGWAENKMMMMNN</sequence>
<reference key="1">
    <citation type="journal article" date="2000" name="Mol. Phylogenet. Evol.">
        <title>Phylogenetic relationships of elapid snakes based on cytochrome b mtDNA sequences.</title>
        <authorList>
            <person name="Slowinski J.B."/>
            <person name="Keogh J.S."/>
        </authorList>
    </citation>
    <scope>NUCLEOTIDE SEQUENCE [GENOMIC DNA]</scope>
</reference>
<proteinExistence type="inferred from homology"/>